<gene>
    <name evidence="1" type="primary">atpF</name>
    <name type="ordered locus">ACL_0986</name>
</gene>
<protein>
    <recommendedName>
        <fullName evidence="1">ATP synthase subunit b</fullName>
    </recommendedName>
    <alternativeName>
        <fullName evidence="1">ATP synthase F(0) sector subunit b</fullName>
    </alternativeName>
    <alternativeName>
        <fullName evidence="1">ATPase subunit I</fullName>
    </alternativeName>
    <alternativeName>
        <fullName evidence="1">F-type ATPase subunit b</fullName>
        <shortName evidence="1">F-ATPase subunit b</shortName>
    </alternativeName>
</protein>
<proteinExistence type="inferred from homology"/>
<feature type="chain" id="PRO_0000368281" description="ATP synthase subunit b">
    <location>
        <begin position="1"/>
        <end position="175"/>
    </location>
</feature>
<feature type="transmembrane region" description="Helical" evidence="1">
    <location>
        <begin position="24"/>
        <end position="44"/>
    </location>
</feature>
<organism>
    <name type="scientific">Acholeplasma laidlawii (strain PG-8A)</name>
    <dbReference type="NCBI Taxonomy" id="441768"/>
    <lineage>
        <taxon>Bacteria</taxon>
        <taxon>Bacillati</taxon>
        <taxon>Mycoplasmatota</taxon>
        <taxon>Mollicutes</taxon>
        <taxon>Acholeplasmatales</taxon>
        <taxon>Acholeplasmataceae</taxon>
        <taxon>Acholeplasma</taxon>
    </lineage>
</organism>
<comment type="function">
    <text evidence="1">F(1)F(0) ATP synthase produces ATP from ADP in the presence of a proton or sodium gradient. F-type ATPases consist of two structural domains, F(1) containing the extramembraneous catalytic core and F(0) containing the membrane proton channel, linked together by a central stalk and a peripheral stalk. During catalysis, ATP synthesis in the catalytic domain of F(1) is coupled via a rotary mechanism of the central stalk subunits to proton translocation.</text>
</comment>
<comment type="function">
    <text evidence="1">Component of the F(0) channel, it forms part of the peripheral stalk, linking F(1) to F(0).</text>
</comment>
<comment type="subunit">
    <text evidence="1">F-type ATPases have 2 components, F(1) - the catalytic core - and F(0) - the membrane proton channel. F(1) has five subunits: alpha(3), beta(3), gamma(1), delta(1), epsilon(1). F(0) has three main subunits: a(1), b(2) and c(10-14). The alpha and beta chains form an alternating ring which encloses part of the gamma chain. F(1) is attached to F(0) by a central stalk formed by the gamma and epsilon chains, while a peripheral stalk is formed by the delta and b chains.</text>
</comment>
<comment type="subcellular location">
    <subcellularLocation>
        <location evidence="1">Cell membrane</location>
        <topology evidence="1">Single-pass membrane protein</topology>
    </subcellularLocation>
</comment>
<comment type="similarity">
    <text evidence="1">Belongs to the ATPase B chain family.</text>
</comment>
<dbReference type="EMBL" id="CP000896">
    <property type="protein sequence ID" value="ABX81596.1"/>
    <property type="molecule type" value="Genomic_DNA"/>
</dbReference>
<dbReference type="RefSeq" id="WP_012242927.1">
    <property type="nucleotide sequence ID" value="NC_010163.1"/>
</dbReference>
<dbReference type="SMR" id="A9NGW6"/>
<dbReference type="STRING" id="441768.ACL_0986"/>
<dbReference type="GeneID" id="41339132"/>
<dbReference type="KEGG" id="acl:ACL_0986"/>
<dbReference type="eggNOG" id="COG0711">
    <property type="taxonomic scope" value="Bacteria"/>
</dbReference>
<dbReference type="HOGENOM" id="CLU_079215_4_0_14"/>
<dbReference type="OrthoDB" id="399036at2"/>
<dbReference type="Proteomes" id="UP000008558">
    <property type="component" value="Chromosome"/>
</dbReference>
<dbReference type="GO" id="GO:0005886">
    <property type="term" value="C:plasma membrane"/>
    <property type="evidence" value="ECO:0007669"/>
    <property type="project" value="UniProtKB-SubCell"/>
</dbReference>
<dbReference type="GO" id="GO:0045259">
    <property type="term" value="C:proton-transporting ATP synthase complex"/>
    <property type="evidence" value="ECO:0007669"/>
    <property type="project" value="UniProtKB-KW"/>
</dbReference>
<dbReference type="GO" id="GO:0046933">
    <property type="term" value="F:proton-transporting ATP synthase activity, rotational mechanism"/>
    <property type="evidence" value="ECO:0007669"/>
    <property type="project" value="UniProtKB-UniRule"/>
</dbReference>
<dbReference type="GO" id="GO:0046961">
    <property type="term" value="F:proton-transporting ATPase activity, rotational mechanism"/>
    <property type="evidence" value="ECO:0007669"/>
    <property type="project" value="TreeGrafter"/>
</dbReference>
<dbReference type="CDD" id="cd06503">
    <property type="entry name" value="ATP-synt_Fo_b"/>
    <property type="match status" value="1"/>
</dbReference>
<dbReference type="HAMAP" id="MF_01398">
    <property type="entry name" value="ATP_synth_b_bprime"/>
    <property type="match status" value="1"/>
</dbReference>
<dbReference type="InterPro" id="IPR002146">
    <property type="entry name" value="ATP_synth_b/b'su_bac/chlpt"/>
</dbReference>
<dbReference type="InterPro" id="IPR050059">
    <property type="entry name" value="ATP_synthase_B_chain"/>
</dbReference>
<dbReference type="PANTHER" id="PTHR33445">
    <property type="entry name" value="ATP SYNTHASE SUBUNIT B', CHLOROPLASTIC"/>
    <property type="match status" value="1"/>
</dbReference>
<dbReference type="PANTHER" id="PTHR33445:SF2">
    <property type="entry name" value="ATP SYNTHASE SUBUNIT B', CHLOROPLASTIC"/>
    <property type="match status" value="1"/>
</dbReference>
<dbReference type="Pfam" id="PF00430">
    <property type="entry name" value="ATP-synt_B"/>
    <property type="match status" value="1"/>
</dbReference>
<evidence type="ECO:0000255" key="1">
    <source>
        <dbReference type="HAMAP-Rule" id="MF_01398"/>
    </source>
</evidence>
<accession>A9NGW6</accession>
<reference key="1">
    <citation type="journal article" date="2011" name="J. Bacteriol.">
        <title>Complete genome and proteome of Acholeplasma laidlawii.</title>
        <authorList>
            <person name="Lazarev V.N."/>
            <person name="Levitskii S.A."/>
            <person name="Basovskii Y.I."/>
            <person name="Chukin M.M."/>
            <person name="Akopian T.A."/>
            <person name="Vereshchagin V.V."/>
            <person name="Kostrjukova E.S."/>
            <person name="Kovaleva G.Y."/>
            <person name="Kazanov M.D."/>
            <person name="Malko D.B."/>
            <person name="Vitreschak A.G."/>
            <person name="Sernova N.V."/>
            <person name="Gelfand M.S."/>
            <person name="Demina I.A."/>
            <person name="Serebryakova M.V."/>
            <person name="Galyamina M.A."/>
            <person name="Vtyurin N.N."/>
            <person name="Rogov S.I."/>
            <person name="Alexeev D.G."/>
            <person name="Ladygina V.G."/>
            <person name="Govorun V.M."/>
        </authorList>
    </citation>
    <scope>NUCLEOTIDE SEQUENCE [LARGE SCALE GENOMIC DNA]</scope>
    <source>
        <strain>PG-8A</strain>
    </source>
</reference>
<keyword id="KW-0066">ATP synthesis</keyword>
<keyword id="KW-1003">Cell membrane</keyword>
<keyword id="KW-0138">CF(0)</keyword>
<keyword id="KW-0375">Hydrogen ion transport</keyword>
<keyword id="KW-0406">Ion transport</keyword>
<keyword id="KW-0472">Membrane</keyword>
<keyword id="KW-1185">Reference proteome</keyword>
<keyword id="KW-0812">Transmembrane</keyword>
<keyword id="KW-1133">Transmembrane helix</keyword>
<keyword id="KW-0813">Transport</keyword>
<name>ATPF_ACHLI</name>
<sequence>MDIFKEISDAIQEGLNSIFERWDLVLWQIAATVILIIVVRIFLWKPITRYLEQRQEALSKELHEAAHERERVAQIRYELQTEYEVMRKEARQMKDTLMSEAQLEKERIISDARNEAKRRIQQVDRDVQQELRLQSEKIRENIKNIAFDVAEKIVSHQVTDENIDEVIDEMLDEKL</sequence>